<organism>
    <name type="scientific">Nautilia profundicola (strain ATCC BAA-1463 / DSM 18972 / AmH)</name>
    <dbReference type="NCBI Taxonomy" id="598659"/>
    <lineage>
        <taxon>Bacteria</taxon>
        <taxon>Pseudomonadati</taxon>
        <taxon>Campylobacterota</taxon>
        <taxon>Epsilonproteobacteria</taxon>
        <taxon>Nautiliales</taxon>
        <taxon>Nautiliaceae</taxon>
        <taxon>Nautilia</taxon>
    </lineage>
</organism>
<feature type="chain" id="PRO_1000166822" description="Large ribosomal subunit protein uL6">
    <location>
        <begin position="1"/>
        <end position="178"/>
    </location>
</feature>
<proteinExistence type="inferred from homology"/>
<accession>B9L6L8</accession>
<comment type="function">
    <text evidence="1">This protein binds to the 23S rRNA, and is important in its secondary structure. It is located near the subunit interface in the base of the L7/L12 stalk, and near the tRNA binding site of the peptidyltransferase center.</text>
</comment>
<comment type="subunit">
    <text evidence="1">Part of the 50S ribosomal subunit.</text>
</comment>
<comment type="similarity">
    <text evidence="1">Belongs to the universal ribosomal protein uL6 family.</text>
</comment>
<protein>
    <recommendedName>
        <fullName evidence="1">Large ribosomal subunit protein uL6</fullName>
    </recommendedName>
    <alternativeName>
        <fullName evidence="2">50S ribosomal protein L6</fullName>
    </alternativeName>
</protein>
<dbReference type="EMBL" id="CP001279">
    <property type="protein sequence ID" value="ACM92113.1"/>
    <property type="molecule type" value="Genomic_DNA"/>
</dbReference>
<dbReference type="RefSeq" id="WP_012663485.1">
    <property type="nucleotide sequence ID" value="NC_012115.1"/>
</dbReference>
<dbReference type="SMR" id="B9L6L8"/>
<dbReference type="STRING" id="598659.NAMH_1626"/>
<dbReference type="KEGG" id="nam:NAMH_1626"/>
<dbReference type="eggNOG" id="COG0097">
    <property type="taxonomic scope" value="Bacteria"/>
</dbReference>
<dbReference type="HOGENOM" id="CLU_065464_1_2_7"/>
<dbReference type="OrthoDB" id="9805007at2"/>
<dbReference type="Proteomes" id="UP000000448">
    <property type="component" value="Chromosome"/>
</dbReference>
<dbReference type="GO" id="GO:0022625">
    <property type="term" value="C:cytosolic large ribosomal subunit"/>
    <property type="evidence" value="ECO:0007669"/>
    <property type="project" value="TreeGrafter"/>
</dbReference>
<dbReference type="GO" id="GO:0019843">
    <property type="term" value="F:rRNA binding"/>
    <property type="evidence" value="ECO:0007669"/>
    <property type="project" value="UniProtKB-UniRule"/>
</dbReference>
<dbReference type="GO" id="GO:0003735">
    <property type="term" value="F:structural constituent of ribosome"/>
    <property type="evidence" value="ECO:0007669"/>
    <property type="project" value="InterPro"/>
</dbReference>
<dbReference type="GO" id="GO:0002181">
    <property type="term" value="P:cytoplasmic translation"/>
    <property type="evidence" value="ECO:0007669"/>
    <property type="project" value="TreeGrafter"/>
</dbReference>
<dbReference type="FunFam" id="3.90.930.12:FF:000001">
    <property type="entry name" value="50S ribosomal protein L6"/>
    <property type="match status" value="1"/>
</dbReference>
<dbReference type="Gene3D" id="3.90.930.12">
    <property type="entry name" value="Ribosomal protein L6, alpha-beta domain"/>
    <property type="match status" value="2"/>
</dbReference>
<dbReference type="HAMAP" id="MF_01365_B">
    <property type="entry name" value="Ribosomal_uL6_B"/>
    <property type="match status" value="1"/>
</dbReference>
<dbReference type="InterPro" id="IPR000702">
    <property type="entry name" value="Ribosomal_uL6-like"/>
</dbReference>
<dbReference type="InterPro" id="IPR036789">
    <property type="entry name" value="Ribosomal_uL6-like_a/b-dom_sf"/>
</dbReference>
<dbReference type="InterPro" id="IPR020040">
    <property type="entry name" value="Ribosomal_uL6_a/b-dom"/>
</dbReference>
<dbReference type="InterPro" id="IPR019906">
    <property type="entry name" value="Ribosomal_uL6_bac-type"/>
</dbReference>
<dbReference type="InterPro" id="IPR002358">
    <property type="entry name" value="Ribosomal_uL6_CS"/>
</dbReference>
<dbReference type="NCBIfam" id="TIGR03654">
    <property type="entry name" value="L6_bact"/>
    <property type="match status" value="1"/>
</dbReference>
<dbReference type="PANTHER" id="PTHR11655">
    <property type="entry name" value="60S/50S RIBOSOMAL PROTEIN L6/L9"/>
    <property type="match status" value="1"/>
</dbReference>
<dbReference type="PANTHER" id="PTHR11655:SF14">
    <property type="entry name" value="LARGE RIBOSOMAL SUBUNIT PROTEIN UL6M"/>
    <property type="match status" value="1"/>
</dbReference>
<dbReference type="Pfam" id="PF00347">
    <property type="entry name" value="Ribosomal_L6"/>
    <property type="match status" value="2"/>
</dbReference>
<dbReference type="PIRSF" id="PIRSF002162">
    <property type="entry name" value="Ribosomal_L6"/>
    <property type="match status" value="1"/>
</dbReference>
<dbReference type="PRINTS" id="PR00059">
    <property type="entry name" value="RIBOSOMALL6"/>
</dbReference>
<dbReference type="SUPFAM" id="SSF56053">
    <property type="entry name" value="Ribosomal protein L6"/>
    <property type="match status" value="2"/>
</dbReference>
<dbReference type="PROSITE" id="PS00525">
    <property type="entry name" value="RIBOSOMAL_L6_1"/>
    <property type="match status" value="1"/>
</dbReference>
<gene>
    <name evidence="1" type="primary">rplF</name>
    <name type="ordered locus">NAMH_1626</name>
</gene>
<evidence type="ECO:0000255" key="1">
    <source>
        <dbReference type="HAMAP-Rule" id="MF_01365"/>
    </source>
</evidence>
<evidence type="ECO:0000305" key="2"/>
<name>RL6_NAUPA</name>
<sequence>MSRIGKQPVKLASGLEAKLEGNKLIIKKGQDEKVIDTKGVVKVNINGDELTFEPVEETKFAKAMWGTVRALANNAVIGLTQGFEKKLEINGVGYRAQVKGNILELQLGYSHPINFEIPKGITITVEKNIITVKGSDKQQVGQVASEIRSFRKPEPYKGKGVKYVDEHIIRKAGKTAKK</sequence>
<keyword id="KW-0687">Ribonucleoprotein</keyword>
<keyword id="KW-0689">Ribosomal protein</keyword>
<keyword id="KW-0694">RNA-binding</keyword>
<keyword id="KW-0699">rRNA-binding</keyword>
<reference key="1">
    <citation type="journal article" date="2009" name="PLoS Genet.">
        <title>Adaptations to submarine hydrothermal environments exemplified by the genome of Nautilia profundicola.</title>
        <authorList>
            <person name="Campbell B.J."/>
            <person name="Smith J.L."/>
            <person name="Hanson T.E."/>
            <person name="Klotz M.G."/>
            <person name="Stein L.Y."/>
            <person name="Lee C.K."/>
            <person name="Wu D."/>
            <person name="Robinson J.M."/>
            <person name="Khouri H.M."/>
            <person name="Eisen J.A."/>
            <person name="Cary S.C."/>
        </authorList>
    </citation>
    <scope>NUCLEOTIDE SEQUENCE [LARGE SCALE GENOMIC DNA]</scope>
    <source>
        <strain>ATCC BAA-1463 / DSM 18972 / AmH</strain>
    </source>
</reference>